<dbReference type="EC" id="4.2.1.59" evidence="1"/>
<dbReference type="EMBL" id="CP000576">
    <property type="protein sequence ID" value="ABO18145.1"/>
    <property type="molecule type" value="Genomic_DNA"/>
</dbReference>
<dbReference type="RefSeq" id="WP_011863449.1">
    <property type="nucleotide sequence ID" value="NC_009091.1"/>
</dbReference>
<dbReference type="SMR" id="A3PEH0"/>
<dbReference type="STRING" id="167546.P9301_15221"/>
<dbReference type="KEGG" id="pmg:P9301_15221"/>
<dbReference type="eggNOG" id="COG0764">
    <property type="taxonomic scope" value="Bacteria"/>
</dbReference>
<dbReference type="HOGENOM" id="CLU_078912_1_1_3"/>
<dbReference type="OrthoDB" id="9772788at2"/>
<dbReference type="Proteomes" id="UP000001430">
    <property type="component" value="Chromosome"/>
</dbReference>
<dbReference type="GO" id="GO:0005737">
    <property type="term" value="C:cytoplasm"/>
    <property type="evidence" value="ECO:0007669"/>
    <property type="project" value="UniProtKB-SubCell"/>
</dbReference>
<dbReference type="GO" id="GO:0016020">
    <property type="term" value="C:membrane"/>
    <property type="evidence" value="ECO:0007669"/>
    <property type="project" value="GOC"/>
</dbReference>
<dbReference type="GO" id="GO:0019171">
    <property type="term" value="F:(3R)-hydroxyacyl-[acyl-carrier-protein] dehydratase activity"/>
    <property type="evidence" value="ECO:0007669"/>
    <property type="project" value="UniProtKB-EC"/>
</dbReference>
<dbReference type="GO" id="GO:0006633">
    <property type="term" value="P:fatty acid biosynthetic process"/>
    <property type="evidence" value="ECO:0007669"/>
    <property type="project" value="UniProtKB-UniRule"/>
</dbReference>
<dbReference type="GO" id="GO:0009245">
    <property type="term" value="P:lipid A biosynthetic process"/>
    <property type="evidence" value="ECO:0007669"/>
    <property type="project" value="UniProtKB-UniRule"/>
</dbReference>
<dbReference type="CDD" id="cd01288">
    <property type="entry name" value="FabZ"/>
    <property type="match status" value="1"/>
</dbReference>
<dbReference type="FunFam" id="3.10.129.10:FF:000001">
    <property type="entry name" value="3-hydroxyacyl-[acyl-carrier-protein] dehydratase FabZ"/>
    <property type="match status" value="1"/>
</dbReference>
<dbReference type="Gene3D" id="3.10.129.10">
    <property type="entry name" value="Hotdog Thioesterase"/>
    <property type="match status" value="1"/>
</dbReference>
<dbReference type="HAMAP" id="MF_00406">
    <property type="entry name" value="FabZ"/>
    <property type="match status" value="1"/>
</dbReference>
<dbReference type="InterPro" id="IPR013114">
    <property type="entry name" value="FabA_FabZ"/>
</dbReference>
<dbReference type="InterPro" id="IPR010084">
    <property type="entry name" value="FabZ"/>
</dbReference>
<dbReference type="InterPro" id="IPR029069">
    <property type="entry name" value="HotDog_dom_sf"/>
</dbReference>
<dbReference type="NCBIfam" id="TIGR01750">
    <property type="entry name" value="fabZ"/>
    <property type="match status" value="1"/>
</dbReference>
<dbReference type="NCBIfam" id="NF000582">
    <property type="entry name" value="PRK00006.1"/>
    <property type="match status" value="1"/>
</dbReference>
<dbReference type="PANTHER" id="PTHR30272">
    <property type="entry name" value="3-HYDROXYACYL-[ACYL-CARRIER-PROTEIN] DEHYDRATASE"/>
    <property type="match status" value="1"/>
</dbReference>
<dbReference type="PANTHER" id="PTHR30272:SF1">
    <property type="entry name" value="3-HYDROXYACYL-[ACYL-CARRIER-PROTEIN] DEHYDRATASE"/>
    <property type="match status" value="1"/>
</dbReference>
<dbReference type="Pfam" id="PF07977">
    <property type="entry name" value="FabA"/>
    <property type="match status" value="1"/>
</dbReference>
<dbReference type="SUPFAM" id="SSF54637">
    <property type="entry name" value="Thioesterase/thiol ester dehydrase-isomerase"/>
    <property type="match status" value="1"/>
</dbReference>
<gene>
    <name evidence="1" type="primary">fabZ</name>
    <name type="ordered locus">P9301_15221</name>
</gene>
<keyword id="KW-0963">Cytoplasm</keyword>
<keyword id="KW-0441">Lipid A biosynthesis</keyword>
<keyword id="KW-0444">Lipid biosynthesis</keyword>
<keyword id="KW-0443">Lipid metabolism</keyword>
<keyword id="KW-0456">Lyase</keyword>
<keyword id="KW-1185">Reference proteome</keyword>
<protein>
    <recommendedName>
        <fullName evidence="1">3-hydroxyacyl-[acyl-carrier-protein] dehydratase FabZ</fullName>
        <ecNumber evidence="1">4.2.1.59</ecNumber>
    </recommendedName>
    <alternativeName>
        <fullName evidence="1">(3R)-hydroxymyristoyl-[acyl-carrier-protein] dehydratase</fullName>
        <shortName evidence="1">(3R)-hydroxymyristoyl-ACP dehydrase</shortName>
    </alternativeName>
    <alternativeName>
        <fullName evidence="1">Beta-hydroxyacyl-ACP dehydratase</fullName>
    </alternativeName>
</protein>
<feature type="chain" id="PRO_0000301909" description="3-hydroxyacyl-[acyl-carrier-protein] dehydratase FabZ">
    <location>
        <begin position="1"/>
        <end position="152"/>
    </location>
</feature>
<feature type="active site" evidence="1">
    <location>
        <position position="58"/>
    </location>
</feature>
<comment type="function">
    <text evidence="1">Involved in unsaturated fatty acids biosynthesis. Catalyzes the dehydration of short chain beta-hydroxyacyl-ACPs and long chain saturated and unsaturated beta-hydroxyacyl-ACPs.</text>
</comment>
<comment type="catalytic activity">
    <reaction evidence="1">
        <text>a (3R)-hydroxyacyl-[ACP] = a (2E)-enoyl-[ACP] + H2O</text>
        <dbReference type="Rhea" id="RHEA:13097"/>
        <dbReference type="Rhea" id="RHEA-COMP:9925"/>
        <dbReference type="Rhea" id="RHEA-COMP:9945"/>
        <dbReference type="ChEBI" id="CHEBI:15377"/>
        <dbReference type="ChEBI" id="CHEBI:78784"/>
        <dbReference type="ChEBI" id="CHEBI:78827"/>
        <dbReference type="EC" id="4.2.1.59"/>
    </reaction>
</comment>
<comment type="subcellular location">
    <subcellularLocation>
        <location evidence="1">Cytoplasm</location>
    </subcellularLocation>
</comment>
<comment type="similarity">
    <text evidence="1">Belongs to the thioester dehydratase family. FabZ subfamily.</text>
</comment>
<sequence length="152" mass="16781">MEKKLSSEKNQLSSEHILGLLPHRYPFALVDKVIENIPGERAVAVKNVTLNEPQFQGHFPERPLMPGVLIVESMAQVGGIIVTQMPDLPKGLFVFAGINNVKFRKPVVPGDQLIISCELLSIKRQRFGKVKGEAYVDGNLVCAGELMFSLVD</sequence>
<proteinExistence type="inferred from homology"/>
<organism>
    <name type="scientific">Prochlorococcus marinus (strain MIT 9301)</name>
    <dbReference type="NCBI Taxonomy" id="167546"/>
    <lineage>
        <taxon>Bacteria</taxon>
        <taxon>Bacillati</taxon>
        <taxon>Cyanobacteriota</taxon>
        <taxon>Cyanophyceae</taxon>
        <taxon>Synechococcales</taxon>
        <taxon>Prochlorococcaceae</taxon>
        <taxon>Prochlorococcus</taxon>
    </lineage>
</organism>
<evidence type="ECO:0000255" key="1">
    <source>
        <dbReference type="HAMAP-Rule" id="MF_00406"/>
    </source>
</evidence>
<name>FABZ_PROM0</name>
<accession>A3PEH0</accession>
<reference key="1">
    <citation type="journal article" date="2007" name="PLoS Genet.">
        <title>Patterns and implications of gene gain and loss in the evolution of Prochlorococcus.</title>
        <authorList>
            <person name="Kettler G.C."/>
            <person name="Martiny A.C."/>
            <person name="Huang K."/>
            <person name="Zucker J."/>
            <person name="Coleman M.L."/>
            <person name="Rodrigue S."/>
            <person name="Chen F."/>
            <person name="Lapidus A."/>
            <person name="Ferriera S."/>
            <person name="Johnson J."/>
            <person name="Steglich C."/>
            <person name="Church G.M."/>
            <person name="Richardson P."/>
            <person name="Chisholm S.W."/>
        </authorList>
    </citation>
    <scope>NUCLEOTIDE SEQUENCE [LARGE SCALE GENOMIC DNA]</scope>
    <source>
        <strain>MIT 9301</strain>
    </source>
</reference>